<gene>
    <name evidence="1" type="primary">tatA</name>
    <name type="ordered locus">Tery_2869</name>
</gene>
<comment type="function">
    <text evidence="1">Part of the twin-arginine translocation (Tat) system that transports large folded proteins containing a characteristic twin-arginine motif in their signal peptide across membranes. TatA could form the protein-conducting channel of the Tat system.</text>
</comment>
<comment type="subunit">
    <text evidence="1">Forms a complex with TatC.</text>
</comment>
<comment type="subcellular location">
    <subcellularLocation>
        <location evidence="1">Cell inner membrane</location>
        <topology evidence="1">Single-pass membrane protein</topology>
    </subcellularLocation>
</comment>
<comment type="similarity">
    <text evidence="1">Belongs to the TatA/E family.</text>
</comment>
<accession>Q110N2</accession>
<evidence type="ECO:0000255" key="1">
    <source>
        <dbReference type="HAMAP-Rule" id="MF_00236"/>
    </source>
</evidence>
<evidence type="ECO:0000256" key="2">
    <source>
        <dbReference type="SAM" id="MobiDB-lite"/>
    </source>
</evidence>
<protein>
    <recommendedName>
        <fullName evidence="1">Sec-independent protein translocase protein TatA</fullName>
    </recommendedName>
</protein>
<proteinExistence type="inferred from homology"/>
<feature type="chain" id="PRO_0000336647" description="Sec-independent protein translocase protein TatA">
    <location>
        <begin position="1"/>
        <end position="87"/>
    </location>
</feature>
<feature type="transmembrane region" description="Helical" evidence="1">
    <location>
        <begin position="3"/>
        <end position="23"/>
    </location>
</feature>
<feature type="region of interest" description="Disordered" evidence="2">
    <location>
        <begin position="61"/>
        <end position="87"/>
    </location>
</feature>
<reference key="1">
    <citation type="journal article" date="2015" name="Proc. Natl. Acad. Sci. U.S.A.">
        <title>Trichodesmium genome maintains abundant, widespread noncoding DNA in situ, despite oligotrophic lifestyle.</title>
        <authorList>
            <person name="Walworth N."/>
            <person name="Pfreundt U."/>
            <person name="Nelson W.C."/>
            <person name="Mincer T."/>
            <person name="Heidelberg J.F."/>
            <person name="Fu F."/>
            <person name="Waterbury J.B."/>
            <person name="Glavina del Rio T."/>
            <person name="Goodwin L."/>
            <person name="Kyrpides N.C."/>
            <person name="Land M.L."/>
            <person name="Woyke T."/>
            <person name="Hutchins D.A."/>
            <person name="Hess W.R."/>
            <person name="Webb E.A."/>
        </authorList>
    </citation>
    <scope>NUCLEOTIDE SEQUENCE [LARGE SCALE GENOMIC DNA]</scope>
    <source>
        <strain>IMS101</strain>
    </source>
</reference>
<keyword id="KW-0997">Cell inner membrane</keyword>
<keyword id="KW-1003">Cell membrane</keyword>
<keyword id="KW-0472">Membrane</keyword>
<keyword id="KW-0653">Protein transport</keyword>
<keyword id="KW-0811">Translocation</keyword>
<keyword id="KW-0812">Transmembrane</keyword>
<keyword id="KW-1133">Transmembrane helix</keyword>
<keyword id="KW-0813">Transport</keyword>
<dbReference type="EMBL" id="CP000393">
    <property type="protein sequence ID" value="ABG52042.1"/>
    <property type="molecule type" value="Genomic_DNA"/>
</dbReference>
<dbReference type="RefSeq" id="WP_011612401.1">
    <property type="nucleotide sequence ID" value="NC_008312.1"/>
</dbReference>
<dbReference type="SMR" id="Q110N2"/>
<dbReference type="STRING" id="203124.Tery_2869"/>
<dbReference type="KEGG" id="ter:Tery_2869"/>
<dbReference type="eggNOG" id="COG1826">
    <property type="taxonomic scope" value="Bacteria"/>
</dbReference>
<dbReference type="HOGENOM" id="CLU_086034_1_5_3"/>
<dbReference type="OrthoDB" id="9800908at2"/>
<dbReference type="GO" id="GO:0033281">
    <property type="term" value="C:TAT protein transport complex"/>
    <property type="evidence" value="ECO:0007669"/>
    <property type="project" value="UniProtKB-UniRule"/>
</dbReference>
<dbReference type="GO" id="GO:0008320">
    <property type="term" value="F:protein transmembrane transporter activity"/>
    <property type="evidence" value="ECO:0007669"/>
    <property type="project" value="UniProtKB-UniRule"/>
</dbReference>
<dbReference type="GO" id="GO:0043953">
    <property type="term" value="P:protein transport by the Tat complex"/>
    <property type="evidence" value="ECO:0007669"/>
    <property type="project" value="UniProtKB-UniRule"/>
</dbReference>
<dbReference type="Gene3D" id="1.20.5.3310">
    <property type="match status" value="1"/>
</dbReference>
<dbReference type="HAMAP" id="MF_00236">
    <property type="entry name" value="TatA_E"/>
    <property type="match status" value="1"/>
</dbReference>
<dbReference type="InterPro" id="IPR003369">
    <property type="entry name" value="TatA/B/E"/>
</dbReference>
<dbReference type="InterPro" id="IPR006312">
    <property type="entry name" value="TatA/E"/>
</dbReference>
<dbReference type="NCBIfam" id="NF011429">
    <property type="entry name" value="PRK14857.1"/>
    <property type="match status" value="1"/>
</dbReference>
<dbReference type="NCBIfam" id="NF011430">
    <property type="entry name" value="PRK14861.1"/>
    <property type="match status" value="1"/>
</dbReference>
<dbReference type="NCBIfam" id="TIGR01411">
    <property type="entry name" value="tatAE"/>
    <property type="match status" value="1"/>
</dbReference>
<dbReference type="PANTHER" id="PTHR33162">
    <property type="entry name" value="SEC-INDEPENDENT PROTEIN TRANSLOCASE PROTEIN TATA, CHLOROPLASTIC"/>
    <property type="match status" value="1"/>
</dbReference>
<dbReference type="PANTHER" id="PTHR33162:SF1">
    <property type="entry name" value="SEC-INDEPENDENT PROTEIN TRANSLOCASE PROTEIN TATA, CHLOROPLASTIC"/>
    <property type="match status" value="1"/>
</dbReference>
<dbReference type="Pfam" id="PF02416">
    <property type="entry name" value="TatA_B_E"/>
    <property type="match status" value="1"/>
</dbReference>
<dbReference type="PRINTS" id="PR01506">
    <property type="entry name" value="TATBPROTEIN"/>
</dbReference>
<sequence>MNIFGIGLPEMIVILVVALLIFGPKKLPEIGRSLGQAINSFKAGARDFENEFKREAKHLEEGVKVSTSASEPEKVVDVSSATNTNKN</sequence>
<organism>
    <name type="scientific">Trichodesmium erythraeum (strain IMS101)</name>
    <dbReference type="NCBI Taxonomy" id="203124"/>
    <lineage>
        <taxon>Bacteria</taxon>
        <taxon>Bacillati</taxon>
        <taxon>Cyanobacteriota</taxon>
        <taxon>Cyanophyceae</taxon>
        <taxon>Oscillatoriophycideae</taxon>
        <taxon>Oscillatoriales</taxon>
        <taxon>Microcoleaceae</taxon>
        <taxon>Trichodesmium</taxon>
    </lineage>
</organism>
<name>TATA_TRIEI</name>